<feature type="chain" id="PRO_0000161164" description="Elongation factor Ts">
    <location>
        <begin position="1"/>
        <end position="275"/>
    </location>
</feature>
<feature type="region of interest" description="Involved in Mg(2+) ion dislocation from EF-Tu" evidence="1">
    <location>
        <begin position="76"/>
        <end position="79"/>
    </location>
</feature>
<sequence>MANYTAADVKRLRELTGSGMMDCKNALAETDGDFDKAVELLRIKGAKDVGKRAERTTAEGLVAAKDGVMIEINSETDFVAKNDEFQALANQIVTAAAAAKTADLDSLKALDLGDGRTADAALQELAAKIGEKLELRRVVSLDGPVATYLHKRASDLPPAVGVLVEYQGAGDAAAEAARAAAMQVAALKAKYVTRDEVPADIVENERRIAEQTAREEGKPEAALPKITEGRVNGFFKDVVLLEQPSVTDNKKTVKQQLDEAGVTVTRFARFEVGQA</sequence>
<protein>
    <recommendedName>
        <fullName evidence="1">Elongation factor Ts</fullName>
        <shortName evidence="1">EF-Ts</shortName>
    </recommendedName>
</protein>
<organism>
    <name type="scientific">Nocardia farcinica (strain IFM 10152)</name>
    <dbReference type="NCBI Taxonomy" id="247156"/>
    <lineage>
        <taxon>Bacteria</taxon>
        <taxon>Bacillati</taxon>
        <taxon>Actinomycetota</taxon>
        <taxon>Actinomycetes</taxon>
        <taxon>Mycobacteriales</taxon>
        <taxon>Nocardiaceae</taxon>
        <taxon>Nocardia</taxon>
    </lineage>
</organism>
<gene>
    <name evidence="1" type="primary">tsf</name>
    <name type="ordered locus">NFA_41300</name>
</gene>
<evidence type="ECO:0000255" key="1">
    <source>
        <dbReference type="HAMAP-Rule" id="MF_00050"/>
    </source>
</evidence>
<reference key="1">
    <citation type="journal article" date="2004" name="Proc. Natl. Acad. Sci. U.S.A.">
        <title>The complete genomic sequence of Nocardia farcinica IFM 10152.</title>
        <authorList>
            <person name="Ishikawa J."/>
            <person name="Yamashita A."/>
            <person name="Mikami Y."/>
            <person name="Hoshino Y."/>
            <person name="Kurita H."/>
            <person name="Hotta K."/>
            <person name="Shiba T."/>
            <person name="Hattori M."/>
        </authorList>
    </citation>
    <scope>NUCLEOTIDE SEQUENCE [LARGE SCALE GENOMIC DNA]</scope>
    <source>
        <strain>IFM 10152</strain>
    </source>
</reference>
<proteinExistence type="inferred from homology"/>
<comment type="function">
    <text evidence="1">Associates with the EF-Tu.GDP complex and induces the exchange of GDP to GTP. It remains bound to the aminoacyl-tRNA.EF-Tu.GTP complex up to the GTP hydrolysis stage on the ribosome.</text>
</comment>
<comment type="subcellular location">
    <subcellularLocation>
        <location evidence="1">Cytoplasm</location>
    </subcellularLocation>
</comment>
<comment type="similarity">
    <text evidence="1">Belongs to the EF-Ts family.</text>
</comment>
<dbReference type="EMBL" id="AP006618">
    <property type="protein sequence ID" value="BAD58979.1"/>
    <property type="molecule type" value="Genomic_DNA"/>
</dbReference>
<dbReference type="RefSeq" id="WP_011210664.1">
    <property type="nucleotide sequence ID" value="NC_006361.1"/>
</dbReference>
<dbReference type="SMR" id="Q5YS62"/>
<dbReference type="STRING" id="247156.NFA_41300"/>
<dbReference type="GeneID" id="61134770"/>
<dbReference type="KEGG" id="nfa:NFA_41300"/>
<dbReference type="eggNOG" id="COG0264">
    <property type="taxonomic scope" value="Bacteria"/>
</dbReference>
<dbReference type="HOGENOM" id="CLU_047155_0_0_11"/>
<dbReference type="OrthoDB" id="9808348at2"/>
<dbReference type="Proteomes" id="UP000006820">
    <property type="component" value="Chromosome"/>
</dbReference>
<dbReference type="GO" id="GO:0005737">
    <property type="term" value="C:cytoplasm"/>
    <property type="evidence" value="ECO:0007669"/>
    <property type="project" value="UniProtKB-SubCell"/>
</dbReference>
<dbReference type="GO" id="GO:0003746">
    <property type="term" value="F:translation elongation factor activity"/>
    <property type="evidence" value="ECO:0007669"/>
    <property type="project" value="UniProtKB-UniRule"/>
</dbReference>
<dbReference type="CDD" id="cd14275">
    <property type="entry name" value="UBA_EF-Ts"/>
    <property type="match status" value="1"/>
</dbReference>
<dbReference type="FunFam" id="1.10.286.20:FF:000001">
    <property type="entry name" value="Elongation factor Ts"/>
    <property type="match status" value="1"/>
</dbReference>
<dbReference type="FunFam" id="1.10.8.10:FF:000001">
    <property type="entry name" value="Elongation factor Ts"/>
    <property type="match status" value="1"/>
</dbReference>
<dbReference type="Gene3D" id="1.10.286.20">
    <property type="match status" value="1"/>
</dbReference>
<dbReference type="Gene3D" id="1.10.8.10">
    <property type="entry name" value="DNA helicase RuvA subunit, C-terminal domain"/>
    <property type="match status" value="1"/>
</dbReference>
<dbReference type="Gene3D" id="3.30.479.20">
    <property type="entry name" value="Elongation factor Ts, dimerisation domain"/>
    <property type="match status" value="2"/>
</dbReference>
<dbReference type="HAMAP" id="MF_00050">
    <property type="entry name" value="EF_Ts"/>
    <property type="match status" value="1"/>
</dbReference>
<dbReference type="InterPro" id="IPR036402">
    <property type="entry name" value="EF-Ts_dimer_sf"/>
</dbReference>
<dbReference type="InterPro" id="IPR001816">
    <property type="entry name" value="Transl_elong_EFTs/EF1B"/>
</dbReference>
<dbReference type="InterPro" id="IPR014039">
    <property type="entry name" value="Transl_elong_EFTs/EF1B_dimer"/>
</dbReference>
<dbReference type="InterPro" id="IPR018101">
    <property type="entry name" value="Transl_elong_Ts_CS"/>
</dbReference>
<dbReference type="InterPro" id="IPR009060">
    <property type="entry name" value="UBA-like_sf"/>
</dbReference>
<dbReference type="NCBIfam" id="TIGR00116">
    <property type="entry name" value="tsf"/>
    <property type="match status" value="1"/>
</dbReference>
<dbReference type="PANTHER" id="PTHR11741">
    <property type="entry name" value="ELONGATION FACTOR TS"/>
    <property type="match status" value="1"/>
</dbReference>
<dbReference type="PANTHER" id="PTHR11741:SF0">
    <property type="entry name" value="ELONGATION FACTOR TS, MITOCHONDRIAL"/>
    <property type="match status" value="1"/>
</dbReference>
<dbReference type="Pfam" id="PF00889">
    <property type="entry name" value="EF_TS"/>
    <property type="match status" value="1"/>
</dbReference>
<dbReference type="SUPFAM" id="SSF54713">
    <property type="entry name" value="Elongation factor Ts (EF-Ts), dimerisation domain"/>
    <property type="match status" value="1"/>
</dbReference>
<dbReference type="SUPFAM" id="SSF46934">
    <property type="entry name" value="UBA-like"/>
    <property type="match status" value="1"/>
</dbReference>
<dbReference type="PROSITE" id="PS01126">
    <property type="entry name" value="EF_TS_1"/>
    <property type="match status" value="1"/>
</dbReference>
<dbReference type="PROSITE" id="PS01127">
    <property type="entry name" value="EF_TS_2"/>
    <property type="match status" value="1"/>
</dbReference>
<keyword id="KW-0963">Cytoplasm</keyword>
<keyword id="KW-0251">Elongation factor</keyword>
<keyword id="KW-0648">Protein biosynthesis</keyword>
<keyword id="KW-1185">Reference proteome</keyword>
<name>EFTS_NOCFA</name>
<accession>Q5YS62</accession>